<name>NDK_BORBR</name>
<organism>
    <name type="scientific">Bordetella bronchiseptica (strain ATCC BAA-588 / NCTC 13252 / RB50)</name>
    <name type="common">Alcaligenes bronchisepticus</name>
    <dbReference type="NCBI Taxonomy" id="257310"/>
    <lineage>
        <taxon>Bacteria</taxon>
        <taxon>Pseudomonadati</taxon>
        <taxon>Pseudomonadota</taxon>
        <taxon>Betaproteobacteria</taxon>
        <taxon>Burkholderiales</taxon>
        <taxon>Alcaligenaceae</taxon>
        <taxon>Bordetella</taxon>
    </lineage>
</organism>
<evidence type="ECO:0000255" key="1">
    <source>
        <dbReference type="HAMAP-Rule" id="MF_00451"/>
    </source>
</evidence>
<accession>Q7WHM7</accession>
<gene>
    <name evidence="1" type="primary">ndk</name>
    <name type="ordered locus">BB3179</name>
</gene>
<feature type="chain" id="PRO_0000136950" description="Nucleoside diphosphate kinase">
    <location>
        <begin position="1"/>
        <end position="141"/>
    </location>
</feature>
<feature type="active site" description="Pros-phosphohistidine intermediate" evidence="1">
    <location>
        <position position="117"/>
    </location>
</feature>
<feature type="binding site" evidence="1">
    <location>
        <position position="11"/>
    </location>
    <ligand>
        <name>ATP</name>
        <dbReference type="ChEBI" id="CHEBI:30616"/>
    </ligand>
</feature>
<feature type="binding site" evidence="1">
    <location>
        <position position="59"/>
    </location>
    <ligand>
        <name>ATP</name>
        <dbReference type="ChEBI" id="CHEBI:30616"/>
    </ligand>
</feature>
<feature type="binding site" evidence="1">
    <location>
        <position position="87"/>
    </location>
    <ligand>
        <name>ATP</name>
        <dbReference type="ChEBI" id="CHEBI:30616"/>
    </ligand>
</feature>
<feature type="binding site" evidence="1">
    <location>
        <position position="93"/>
    </location>
    <ligand>
        <name>ATP</name>
        <dbReference type="ChEBI" id="CHEBI:30616"/>
    </ligand>
</feature>
<feature type="binding site" evidence="1">
    <location>
        <position position="104"/>
    </location>
    <ligand>
        <name>ATP</name>
        <dbReference type="ChEBI" id="CHEBI:30616"/>
    </ligand>
</feature>
<feature type="binding site" evidence="1">
    <location>
        <position position="114"/>
    </location>
    <ligand>
        <name>ATP</name>
        <dbReference type="ChEBI" id="CHEBI:30616"/>
    </ligand>
</feature>
<dbReference type="EC" id="2.7.4.6" evidence="1"/>
<dbReference type="EMBL" id="BX640446">
    <property type="protein sequence ID" value="CAE33671.1"/>
    <property type="molecule type" value="Genomic_DNA"/>
</dbReference>
<dbReference type="RefSeq" id="WP_003810689.1">
    <property type="nucleotide sequence ID" value="NC_002927.3"/>
</dbReference>
<dbReference type="SMR" id="Q7WHM7"/>
<dbReference type="GeneID" id="93204645"/>
<dbReference type="KEGG" id="bbr:BB3179"/>
<dbReference type="eggNOG" id="COG0105">
    <property type="taxonomic scope" value="Bacteria"/>
</dbReference>
<dbReference type="HOGENOM" id="CLU_060216_8_1_4"/>
<dbReference type="Proteomes" id="UP000001027">
    <property type="component" value="Chromosome"/>
</dbReference>
<dbReference type="GO" id="GO:0005737">
    <property type="term" value="C:cytoplasm"/>
    <property type="evidence" value="ECO:0007669"/>
    <property type="project" value="UniProtKB-SubCell"/>
</dbReference>
<dbReference type="GO" id="GO:0005524">
    <property type="term" value="F:ATP binding"/>
    <property type="evidence" value="ECO:0007669"/>
    <property type="project" value="UniProtKB-UniRule"/>
</dbReference>
<dbReference type="GO" id="GO:0046872">
    <property type="term" value="F:metal ion binding"/>
    <property type="evidence" value="ECO:0007669"/>
    <property type="project" value="UniProtKB-KW"/>
</dbReference>
<dbReference type="GO" id="GO:0004550">
    <property type="term" value="F:nucleoside diphosphate kinase activity"/>
    <property type="evidence" value="ECO:0007669"/>
    <property type="project" value="UniProtKB-UniRule"/>
</dbReference>
<dbReference type="GO" id="GO:0006241">
    <property type="term" value="P:CTP biosynthetic process"/>
    <property type="evidence" value="ECO:0007669"/>
    <property type="project" value="UniProtKB-UniRule"/>
</dbReference>
<dbReference type="GO" id="GO:0006183">
    <property type="term" value="P:GTP biosynthetic process"/>
    <property type="evidence" value="ECO:0007669"/>
    <property type="project" value="UniProtKB-UniRule"/>
</dbReference>
<dbReference type="GO" id="GO:0006228">
    <property type="term" value="P:UTP biosynthetic process"/>
    <property type="evidence" value="ECO:0007669"/>
    <property type="project" value="UniProtKB-UniRule"/>
</dbReference>
<dbReference type="CDD" id="cd04413">
    <property type="entry name" value="NDPk_I"/>
    <property type="match status" value="1"/>
</dbReference>
<dbReference type="FunFam" id="3.30.70.141:FF:000001">
    <property type="entry name" value="Nucleoside diphosphate kinase"/>
    <property type="match status" value="1"/>
</dbReference>
<dbReference type="Gene3D" id="3.30.70.141">
    <property type="entry name" value="Nucleoside diphosphate kinase-like domain"/>
    <property type="match status" value="1"/>
</dbReference>
<dbReference type="HAMAP" id="MF_00451">
    <property type="entry name" value="NDP_kinase"/>
    <property type="match status" value="1"/>
</dbReference>
<dbReference type="InterPro" id="IPR034907">
    <property type="entry name" value="NDK-like_dom"/>
</dbReference>
<dbReference type="InterPro" id="IPR036850">
    <property type="entry name" value="NDK-like_dom_sf"/>
</dbReference>
<dbReference type="InterPro" id="IPR001564">
    <property type="entry name" value="Nucleoside_diP_kinase"/>
</dbReference>
<dbReference type="InterPro" id="IPR023005">
    <property type="entry name" value="Nucleoside_diP_kinase_AS"/>
</dbReference>
<dbReference type="NCBIfam" id="NF001908">
    <property type="entry name" value="PRK00668.1"/>
    <property type="match status" value="1"/>
</dbReference>
<dbReference type="PANTHER" id="PTHR46161">
    <property type="entry name" value="NUCLEOSIDE DIPHOSPHATE KINASE"/>
    <property type="match status" value="1"/>
</dbReference>
<dbReference type="PANTHER" id="PTHR46161:SF3">
    <property type="entry name" value="NUCLEOSIDE DIPHOSPHATE KINASE DDB_G0292928-RELATED"/>
    <property type="match status" value="1"/>
</dbReference>
<dbReference type="Pfam" id="PF00334">
    <property type="entry name" value="NDK"/>
    <property type="match status" value="1"/>
</dbReference>
<dbReference type="PRINTS" id="PR01243">
    <property type="entry name" value="NUCDPKINASE"/>
</dbReference>
<dbReference type="SMART" id="SM00562">
    <property type="entry name" value="NDK"/>
    <property type="match status" value="1"/>
</dbReference>
<dbReference type="SUPFAM" id="SSF54919">
    <property type="entry name" value="Nucleoside diphosphate kinase, NDK"/>
    <property type="match status" value="1"/>
</dbReference>
<dbReference type="PROSITE" id="PS00469">
    <property type="entry name" value="NDPK"/>
    <property type="match status" value="1"/>
</dbReference>
<dbReference type="PROSITE" id="PS51374">
    <property type="entry name" value="NDPK_LIKE"/>
    <property type="match status" value="1"/>
</dbReference>
<sequence>MSIERTLSIIKPDAVAKNVVGQIVARFEQAGLKVIAARMQQLSRTDAERFYAVHKERPFFKDLVDFMVSGPVFVQVLEGESAIQKNRDLMGATDPKKAAPGTIRADFADSIDANAVHGSDAPETAAVEVAFFFPEINIHSR</sequence>
<keyword id="KW-0067">ATP-binding</keyword>
<keyword id="KW-0963">Cytoplasm</keyword>
<keyword id="KW-0418">Kinase</keyword>
<keyword id="KW-0460">Magnesium</keyword>
<keyword id="KW-0479">Metal-binding</keyword>
<keyword id="KW-0546">Nucleotide metabolism</keyword>
<keyword id="KW-0547">Nucleotide-binding</keyword>
<keyword id="KW-0597">Phosphoprotein</keyword>
<keyword id="KW-0808">Transferase</keyword>
<comment type="function">
    <text evidence="1">Major role in the synthesis of nucleoside triphosphates other than ATP. The ATP gamma phosphate is transferred to the NDP beta phosphate via a ping-pong mechanism, using a phosphorylated active-site intermediate.</text>
</comment>
<comment type="catalytic activity">
    <reaction evidence="1">
        <text>a 2'-deoxyribonucleoside 5'-diphosphate + ATP = a 2'-deoxyribonucleoside 5'-triphosphate + ADP</text>
        <dbReference type="Rhea" id="RHEA:44640"/>
        <dbReference type="ChEBI" id="CHEBI:30616"/>
        <dbReference type="ChEBI" id="CHEBI:61560"/>
        <dbReference type="ChEBI" id="CHEBI:73316"/>
        <dbReference type="ChEBI" id="CHEBI:456216"/>
        <dbReference type="EC" id="2.7.4.6"/>
    </reaction>
</comment>
<comment type="catalytic activity">
    <reaction evidence="1">
        <text>a ribonucleoside 5'-diphosphate + ATP = a ribonucleoside 5'-triphosphate + ADP</text>
        <dbReference type="Rhea" id="RHEA:18113"/>
        <dbReference type="ChEBI" id="CHEBI:30616"/>
        <dbReference type="ChEBI" id="CHEBI:57930"/>
        <dbReference type="ChEBI" id="CHEBI:61557"/>
        <dbReference type="ChEBI" id="CHEBI:456216"/>
        <dbReference type="EC" id="2.7.4.6"/>
    </reaction>
</comment>
<comment type="cofactor">
    <cofactor evidence="1">
        <name>Mg(2+)</name>
        <dbReference type="ChEBI" id="CHEBI:18420"/>
    </cofactor>
</comment>
<comment type="subunit">
    <text evidence="1">Homotetramer.</text>
</comment>
<comment type="subcellular location">
    <subcellularLocation>
        <location evidence="1">Cytoplasm</location>
    </subcellularLocation>
</comment>
<comment type="similarity">
    <text evidence="1">Belongs to the NDK family.</text>
</comment>
<protein>
    <recommendedName>
        <fullName evidence="1">Nucleoside diphosphate kinase</fullName>
        <shortName evidence="1">NDK</shortName>
        <shortName evidence="1">NDP kinase</shortName>
        <ecNumber evidence="1">2.7.4.6</ecNumber>
    </recommendedName>
    <alternativeName>
        <fullName evidence="1">Nucleoside-2-P kinase</fullName>
    </alternativeName>
</protein>
<reference key="1">
    <citation type="journal article" date="2003" name="Nat. Genet.">
        <title>Comparative analysis of the genome sequences of Bordetella pertussis, Bordetella parapertussis and Bordetella bronchiseptica.</title>
        <authorList>
            <person name="Parkhill J."/>
            <person name="Sebaihia M."/>
            <person name="Preston A."/>
            <person name="Murphy L.D."/>
            <person name="Thomson N.R."/>
            <person name="Harris D.E."/>
            <person name="Holden M.T.G."/>
            <person name="Churcher C.M."/>
            <person name="Bentley S.D."/>
            <person name="Mungall K.L."/>
            <person name="Cerdeno-Tarraga A.-M."/>
            <person name="Temple L."/>
            <person name="James K.D."/>
            <person name="Harris B."/>
            <person name="Quail M.A."/>
            <person name="Achtman M."/>
            <person name="Atkin R."/>
            <person name="Baker S."/>
            <person name="Basham D."/>
            <person name="Bason N."/>
            <person name="Cherevach I."/>
            <person name="Chillingworth T."/>
            <person name="Collins M."/>
            <person name="Cronin A."/>
            <person name="Davis P."/>
            <person name="Doggett J."/>
            <person name="Feltwell T."/>
            <person name="Goble A."/>
            <person name="Hamlin N."/>
            <person name="Hauser H."/>
            <person name="Holroyd S."/>
            <person name="Jagels K."/>
            <person name="Leather S."/>
            <person name="Moule S."/>
            <person name="Norberczak H."/>
            <person name="O'Neil S."/>
            <person name="Ormond D."/>
            <person name="Price C."/>
            <person name="Rabbinowitsch E."/>
            <person name="Rutter S."/>
            <person name="Sanders M."/>
            <person name="Saunders D."/>
            <person name="Seeger K."/>
            <person name="Sharp S."/>
            <person name="Simmonds M."/>
            <person name="Skelton J."/>
            <person name="Squares R."/>
            <person name="Squares S."/>
            <person name="Stevens K."/>
            <person name="Unwin L."/>
            <person name="Whitehead S."/>
            <person name="Barrell B.G."/>
            <person name="Maskell D.J."/>
        </authorList>
    </citation>
    <scope>NUCLEOTIDE SEQUENCE [LARGE SCALE GENOMIC DNA]</scope>
    <source>
        <strain>ATCC BAA-588 / NCTC 13252 / RB50</strain>
    </source>
</reference>
<proteinExistence type="inferred from homology"/>